<evidence type="ECO:0000255" key="1">
    <source>
        <dbReference type="HAMAP-Rule" id="MF_03055"/>
    </source>
</evidence>
<evidence type="ECO:0000256" key="2">
    <source>
        <dbReference type="SAM" id="MobiDB-lite"/>
    </source>
</evidence>
<name>TRMB_EREGS</name>
<protein>
    <recommendedName>
        <fullName evidence="1">tRNA (guanine-N(7)-)-methyltransferase</fullName>
        <ecNumber evidence="1">2.1.1.33</ecNumber>
    </recommendedName>
    <alternativeName>
        <fullName evidence="1">Transfer RNA methyltransferase 8</fullName>
    </alternativeName>
    <alternativeName>
        <fullName evidence="1">tRNA (guanine(46)-N(7))-methyltransferase</fullName>
    </alternativeName>
    <alternativeName>
        <fullName evidence="1">tRNA(m7G46)-methyltransferase</fullName>
    </alternativeName>
</protein>
<comment type="function">
    <text evidence="1">Catalyzes the formation of N(7)-methylguanine at position 46 (m7G46) in tRNA.</text>
</comment>
<comment type="catalytic activity">
    <reaction evidence="1">
        <text>guanosine(46) in tRNA + S-adenosyl-L-methionine = N(7)-methylguanosine(46) in tRNA + S-adenosyl-L-homocysteine</text>
        <dbReference type="Rhea" id="RHEA:42708"/>
        <dbReference type="Rhea" id="RHEA-COMP:10188"/>
        <dbReference type="Rhea" id="RHEA-COMP:10189"/>
        <dbReference type="ChEBI" id="CHEBI:57856"/>
        <dbReference type="ChEBI" id="CHEBI:59789"/>
        <dbReference type="ChEBI" id="CHEBI:74269"/>
        <dbReference type="ChEBI" id="CHEBI:74480"/>
        <dbReference type="EC" id="2.1.1.33"/>
    </reaction>
</comment>
<comment type="pathway">
    <text evidence="1">tRNA modification; N(7)-methylguanine-tRNA biosynthesis.</text>
</comment>
<comment type="subunit">
    <text evidence="1">Forms a complex with TRM82.</text>
</comment>
<comment type="subcellular location">
    <subcellularLocation>
        <location evidence="1">Nucleus</location>
    </subcellularLocation>
</comment>
<comment type="similarity">
    <text evidence="1">Belongs to the class I-like SAM-binding methyltransferase superfamily. TrmB family.</text>
</comment>
<reference key="1">
    <citation type="journal article" date="2004" name="Science">
        <title>The Ashbya gossypii genome as a tool for mapping the ancient Saccharomyces cerevisiae genome.</title>
        <authorList>
            <person name="Dietrich F.S."/>
            <person name="Voegeli S."/>
            <person name="Brachat S."/>
            <person name="Lerch A."/>
            <person name="Gates K."/>
            <person name="Steiner S."/>
            <person name="Mohr C."/>
            <person name="Poehlmann R."/>
            <person name="Luedi P."/>
            <person name="Choi S."/>
            <person name="Wing R.A."/>
            <person name="Flavier A."/>
            <person name="Gaffney T.D."/>
            <person name="Philippsen P."/>
        </authorList>
    </citation>
    <scope>NUCLEOTIDE SEQUENCE [LARGE SCALE GENOMIC DNA]</scope>
    <source>
        <strain>ATCC 10895 / CBS 109.51 / FGSC 9923 / NRRL Y-1056</strain>
    </source>
</reference>
<reference key="2">
    <citation type="journal article" date="2013" name="G3 (Bethesda)">
        <title>Genomes of Ashbya fungi isolated from insects reveal four mating-type loci, numerous translocations, lack of transposons, and distinct gene duplications.</title>
        <authorList>
            <person name="Dietrich F.S."/>
            <person name="Voegeli S."/>
            <person name="Kuo S."/>
            <person name="Philippsen P."/>
        </authorList>
    </citation>
    <scope>GENOME REANNOTATION</scope>
    <source>
        <strain>ATCC 10895 / CBS 109.51 / FGSC 9923 / NRRL Y-1056</strain>
    </source>
</reference>
<gene>
    <name evidence="1" type="primary">TRM8</name>
    <name type="ordered locus">AGR192C</name>
</gene>
<feature type="chain" id="PRO_0000370583" description="tRNA (guanine-N(7)-)-methyltransferase">
    <location>
        <begin position="1"/>
        <end position="282"/>
    </location>
</feature>
<feature type="region of interest" description="Disordered" evidence="2">
    <location>
        <begin position="1"/>
        <end position="31"/>
    </location>
</feature>
<feature type="compositionally biased region" description="Basic and acidic residues" evidence="2">
    <location>
        <begin position="16"/>
        <end position="31"/>
    </location>
</feature>
<feature type="active site" evidence="1">
    <location>
        <position position="180"/>
    </location>
</feature>
<feature type="binding site" evidence="1">
    <location>
        <position position="99"/>
    </location>
    <ligand>
        <name>S-adenosyl-L-methionine</name>
        <dbReference type="ChEBI" id="CHEBI:59789"/>
    </ligand>
</feature>
<feature type="binding site" evidence="1">
    <location>
        <begin position="122"/>
        <end position="123"/>
    </location>
    <ligand>
        <name>S-adenosyl-L-methionine</name>
        <dbReference type="ChEBI" id="CHEBI:59789"/>
    </ligand>
</feature>
<feature type="binding site" evidence="1">
    <location>
        <begin position="157"/>
        <end position="158"/>
    </location>
    <ligand>
        <name>S-adenosyl-L-methionine</name>
        <dbReference type="ChEBI" id="CHEBI:59789"/>
    </ligand>
</feature>
<feature type="binding site" evidence="1">
    <location>
        <position position="177"/>
    </location>
    <ligand>
        <name>S-adenosyl-L-methionine</name>
        <dbReference type="ChEBI" id="CHEBI:59789"/>
    </ligand>
</feature>
<feature type="binding site" evidence="1">
    <location>
        <begin position="255"/>
        <end position="257"/>
    </location>
    <ligand>
        <name>S-adenosyl-L-methionine</name>
        <dbReference type="ChEBI" id="CHEBI:59789"/>
    </ligand>
</feature>
<keyword id="KW-0489">Methyltransferase</keyword>
<keyword id="KW-0539">Nucleus</keyword>
<keyword id="KW-1185">Reference proteome</keyword>
<keyword id="KW-0694">RNA-binding</keyword>
<keyword id="KW-0949">S-adenosyl-L-methionine</keyword>
<keyword id="KW-0808">Transferase</keyword>
<keyword id="KW-0819">tRNA processing</keyword>
<keyword id="KW-0820">tRNA-binding</keyword>
<proteinExistence type="inferred from homology"/>
<dbReference type="EC" id="2.1.1.33" evidence="1"/>
<dbReference type="EMBL" id="AE016820">
    <property type="protein sequence ID" value="AAS54682.1"/>
    <property type="molecule type" value="Genomic_DNA"/>
</dbReference>
<dbReference type="RefSeq" id="NP_986858.1">
    <property type="nucleotide sequence ID" value="NM_211920.1"/>
</dbReference>
<dbReference type="SMR" id="Q74ZK8"/>
<dbReference type="FunCoup" id="Q74ZK8">
    <property type="interactions" value="562"/>
</dbReference>
<dbReference type="STRING" id="284811.Q74ZK8"/>
<dbReference type="EnsemblFungi" id="AAS54682">
    <property type="protein sequence ID" value="AAS54682"/>
    <property type="gene ID" value="AGOS_AGR192C"/>
</dbReference>
<dbReference type="GeneID" id="4623160"/>
<dbReference type="KEGG" id="ago:AGOS_AGR192C"/>
<dbReference type="eggNOG" id="KOG3115">
    <property type="taxonomic scope" value="Eukaryota"/>
</dbReference>
<dbReference type="HOGENOM" id="CLU_050910_3_1_1"/>
<dbReference type="InParanoid" id="Q74ZK8"/>
<dbReference type="OMA" id="LPNYFAK"/>
<dbReference type="OrthoDB" id="47276at2759"/>
<dbReference type="UniPathway" id="UPA00989"/>
<dbReference type="Proteomes" id="UP000000591">
    <property type="component" value="Chromosome VII"/>
</dbReference>
<dbReference type="GO" id="GO:0005634">
    <property type="term" value="C:nucleus"/>
    <property type="evidence" value="ECO:0007669"/>
    <property type="project" value="UniProtKB-SubCell"/>
</dbReference>
<dbReference type="GO" id="GO:0106143">
    <property type="term" value="C:tRNA (m7G46) methyltransferase complex"/>
    <property type="evidence" value="ECO:0007669"/>
    <property type="project" value="EnsemblFungi"/>
</dbReference>
<dbReference type="GO" id="GO:0043527">
    <property type="term" value="C:tRNA methyltransferase complex"/>
    <property type="evidence" value="ECO:0000318"/>
    <property type="project" value="GO_Central"/>
</dbReference>
<dbReference type="GO" id="GO:0008176">
    <property type="term" value="F:tRNA (guanine(46)-N7)-methyltransferase activity"/>
    <property type="evidence" value="ECO:0000318"/>
    <property type="project" value="GO_Central"/>
</dbReference>
<dbReference type="GO" id="GO:0000049">
    <property type="term" value="F:tRNA binding"/>
    <property type="evidence" value="ECO:0007669"/>
    <property type="project" value="UniProtKB-UniRule"/>
</dbReference>
<dbReference type="GO" id="GO:0036265">
    <property type="term" value="P:RNA (guanine-N7)-methylation"/>
    <property type="evidence" value="ECO:0000318"/>
    <property type="project" value="GO_Central"/>
</dbReference>
<dbReference type="GO" id="GO:0030488">
    <property type="term" value="P:tRNA methylation"/>
    <property type="evidence" value="ECO:0000318"/>
    <property type="project" value="GO_Central"/>
</dbReference>
<dbReference type="CDD" id="cd02440">
    <property type="entry name" value="AdoMet_MTases"/>
    <property type="match status" value="1"/>
</dbReference>
<dbReference type="FunFam" id="3.40.50.150:FF:000060">
    <property type="entry name" value="tRNA (guanine-N(7)-)-methyltransferase"/>
    <property type="match status" value="1"/>
</dbReference>
<dbReference type="Gene3D" id="3.40.50.150">
    <property type="entry name" value="Vaccinia Virus protein VP39"/>
    <property type="match status" value="1"/>
</dbReference>
<dbReference type="HAMAP" id="MF_03055">
    <property type="entry name" value="tRNA_methyltr_TrmB_euk"/>
    <property type="match status" value="1"/>
</dbReference>
<dbReference type="InterPro" id="IPR029063">
    <property type="entry name" value="SAM-dependent_MTases_sf"/>
</dbReference>
<dbReference type="InterPro" id="IPR025763">
    <property type="entry name" value="Trm8_euk"/>
</dbReference>
<dbReference type="InterPro" id="IPR003358">
    <property type="entry name" value="tRNA_(Gua-N-7)_MeTrfase_Trmb"/>
</dbReference>
<dbReference type="NCBIfam" id="TIGR00091">
    <property type="entry name" value="tRNA (guanosine(46)-N7)-methyltransferase TrmB"/>
    <property type="match status" value="1"/>
</dbReference>
<dbReference type="PANTHER" id="PTHR23417">
    <property type="entry name" value="3-DEOXY-D-MANNO-OCTULOSONIC-ACID TRANSFERASE/TRNA GUANINE-N 7 - -METHYLTRANSFERASE"/>
    <property type="match status" value="1"/>
</dbReference>
<dbReference type="PANTHER" id="PTHR23417:SF16">
    <property type="entry name" value="TRNA (GUANINE-N(7)-)-METHYLTRANSFERASE"/>
    <property type="match status" value="1"/>
</dbReference>
<dbReference type="Pfam" id="PF02390">
    <property type="entry name" value="Methyltransf_4"/>
    <property type="match status" value="1"/>
</dbReference>
<dbReference type="SUPFAM" id="SSF53335">
    <property type="entry name" value="S-adenosyl-L-methionine-dependent methyltransferases"/>
    <property type="match status" value="1"/>
</dbReference>
<dbReference type="PROSITE" id="PS51625">
    <property type="entry name" value="SAM_MT_TRMB"/>
    <property type="match status" value="1"/>
</dbReference>
<accession>Q74ZK8</accession>
<sequence length="282" mass="32889">MSLTDDQASKRQAYRAAKEANRKELKHVKIDDALPNKSSELDLPKKKFYRQRAHSNPFSDHQLEYPLSPAEMDWSKLYPHYYDAATNTMTKKVTVADIGCGYGGLMVELSRELPENLILGMEIRVQVTNYVEDRIIALRTNHAAQKEYQNINVLRGNAMKFLPNFFEKSQLEKMFFCFPDPHFKQRKHKARIITNTLLSEYAYVLKEGGVIYTITDVLDLHNWMVEHLNMHPLFDRLGDEWLDQDPCVRIMRHATEEGKKVARKQGDKFVACFRRLPNPELV</sequence>
<organism>
    <name type="scientific">Eremothecium gossypii (strain ATCC 10895 / CBS 109.51 / FGSC 9923 / NRRL Y-1056)</name>
    <name type="common">Yeast</name>
    <name type="synonym">Ashbya gossypii</name>
    <dbReference type="NCBI Taxonomy" id="284811"/>
    <lineage>
        <taxon>Eukaryota</taxon>
        <taxon>Fungi</taxon>
        <taxon>Dikarya</taxon>
        <taxon>Ascomycota</taxon>
        <taxon>Saccharomycotina</taxon>
        <taxon>Saccharomycetes</taxon>
        <taxon>Saccharomycetales</taxon>
        <taxon>Saccharomycetaceae</taxon>
        <taxon>Eremothecium</taxon>
    </lineage>
</organism>